<name>CSRA_CLOK5</name>
<gene>
    <name evidence="1" type="primary">csrA</name>
    <name type="ordered locus">CKL_2117</name>
</gene>
<feature type="chain" id="PRO_1000076989" description="Translational regulator CsrA">
    <location>
        <begin position="1"/>
        <end position="73"/>
    </location>
</feature>
<organism>
    <name type="scientific">Clostridium kluyveri (strain ATCC 8527 / DSM 555 / NBRC 12016 / NCIMB 10680 / K1)</name>
    <dbReference type="NCBI Taxonomy" id="431943"/>
    <lineage>
        <taxon>Bacteria</taxon>
        <taxon>Bacillati</taxon>
        <taxon>Bacillota</taxon>
        <taxon>Clostridia</taxon>
        <taxon>Eubacteriales</taxon>
        <taxon>Clostridiaceae</taxon>
        <taxon>Clostridium</taxon>
    </lineage>
</organism>
<reference key="1">
    <citation type="journal article" date="2008" name="Proc. Natl. Acad. Sci. U.S.A.">
        <title>The genome of Clostridium kluyveri, a strict anaerobe with unique metabolic features.</title>
        <authorList>
            <person name="Seedorf H."/>
            <person name="Fricke W.F."/>
            <person name="Veith B."/>
            <person name="Brueggemann H."/>
            <person name="Liesegang H."/>
            <person name="Strittmatter A."/>
            <person name="Miethke M."/>
            <person name="Buckel W."/>
            <person name="Hinderberger J."/>
            <person name="Li F."/>
            <person name="Hagemeier C."/>
            <person name="Thauer R.K."/>
            <person name="Gottschalk G."/>
        </authorList>
    </citation>
    <scope>NUCLEOTIDE SEQUENCE [LARGE SCALE GENOMIC DNA]</scope>
    <source>
        <strain>ATCC 8527 / DSM 555 / NBRC 12016 / NCIMB 10680 / K1</strain>
    </source>
</reference>
<sequence length="73" mass="8126">MLVISRKKGESLLIGEDIEITVTKIEEGAVKLSISAPRSVTILRKELYREIEEENKNSAASDISVLKKLKGKK</sequence>
<evidence type="ECO:0000255" key="1">
    <source>
        <dbReference type="HAMAP-Rule" id="MF_00167"/>
    </source>
</evidence>
<keyword id="KW-1005">Bacterial flagellum biogenesis</keyword>
<keyword id="KW-0963">Cytoplasm</keyword>
<keyword id="KW-1185">Reference proteome</keyword>
<keyword id="KW-0678">Repressor</keyword>
<keyword id="KW-0694">RNA-binding</keyword>
<keyword id="KW-0810">Translation regulation</keyword>
<accession>A5MZ33</accession>
<proteinExistence type="inferred from homology"/>
<protein>
    <recommendedName>
        <fullName evidence="1">Translational regulator CsrA</fullName>
    </recommendedName>
</protein>
<dbReference type="EMBL" id="CP000673">
    <property type="protein sequence ID" value="EDK34129.1"/>
    <property type="molecule type" value="Genomic_DNA"/>
</dbReference>
<dbReference type="RefSeq" id="WP_012102455.1">
    <property type="nucleotide sequence ID" value="NC_009706.1"/>
</dbReference>
<dbReference type="SMR" id="A5MZ33"/>
<dbReference type="STRING" id="431943.CKL_2117"/>
<dbReference type="KEGG" id="ckl:CKL_2117"/>
<dbReference type="eggNOG" id="COG1551">
    <property type="taxonomic scope" value="Bacteria"/>
</dbReference>
<dbReference type="HOGENOM" id="CLU_164837_0_0_9"/>
<dbReference type="Proteomes" id="UP000002411">
    <property type="component" value="Chromosome"/>
</dbReference>
<dbReference type="GO" id="GO:0005829">
    <property type="term" value="C:cytosol"/>
    <property type="evidence" value="ECO:0007669"/>
    <property type="project" value="TreeGrafter"/>
</dbReference>
<dbReference type="GO" id="GO:0048027">
    <property type="term" value="F:mRNA 5'-UTR binding"/>
    <property type="evidence" value="ECO:0007669"/>
    <property type="project" value="UniProtKB-UniRule"/>
</dbReference>
<dbReference type="GO" id="GO:0044781">
    <property type="term" value="P:bacterial-type flagellum organization"/>
    <property type="evidence" value="ECO:0007669"/>
    <property type="project" value="UniProtKB-KW"/>
</dbReference>
<dbReference type="GO" id="GO:0006402">
    <property type="term" value="P:mRNA catabolic process"/>
    <property type="evidence" value="ECO:0007669"/>
    <property type="project" value="InterPro"/>
</dbReference>
<dbReference type="GO" id="GO:0045947">
    <property type="term" value="P:negative regulation of translational initiation"/>
    <property type="evidence" value="ECO:0007669"/>
    <property type="project" value="UniProtKB-UniRule"/>
</dbReference>
<dbReference type="GO" id="GO:1902208">
    <property type="term" value="P:regulation of bacterial-type flagellum assembly"/>
    <property type="evidence" value="ECO:0007669"/>
    <property type="project" value="UniProtKB-UniRule"/>
</dbReference>
<dbReference type="GO" id="GO:0006109">
    <property type="term" value="P:regulation of carbohydrate metabolic process"/>
    <property type="evidence" value="ECO:0007669"/>
    <property type="project" value="InterPro"/>
</dbReference>
<dbReference type="FunFam" id="2.60.40.4380:FF:000002">
    <property type="entry name" value="Translational regulator CsrA"/>
    <property type="match status" value="1"/>
</dbReference>
<dbReference type="Gene3D" id="2.60.40.4380">
    <property type="entry name" value="Translational regulator CsrA"/>
    <property type="match status" value="1"/>
</dbReference>
<dbReference type="HAMAP" id="MF_00167">
    <property type="entry name" value="CsrA"/>
    <property type="match status" value="1"/>
</dbReference>
<dbReference type="InterPro" id="IPR003751">
    <property type="entry name" value="CsrA"/>
</dbReference>
<dbReference type="InterPro" id="IPR036107">
    <property type="entry name" value="CsrA_sf"/>
</dbReference>
<dbReference type="NCBIfam" id="TIGR00202">
    <property type="entry name" value="csrA"/>
    <property type="match status" value="1"/>
</dbReference>
<dbReference type="NCBIfam" id="NF002469">
    <property type="entry name" value="PRK01712.1"/>
    <property type="match status" value="1"/>
</dbReference>
<dbReference type="PANTHER" id="PTHR34984">
    <property type="entry name" value="CARBON STORAGE REGULATOR"/>
    <property type="match status" value="1"/>
</dbReference>
<dbReference type="PANTHER" id="PTHR34984:SF1">
    <property type="entry name" value="CARBON STORAGE REGULATOR"/>
    <property type="match status" value="1"/>
</dbReference>
<dbReference type="Pfam" id="PF02599">
    <property type="entry name" value="CsrA"/>
    <property type="match status" value="1"/>
</dbReference>
<dbReference type="SUPFAM" id="SSF117130">
    <property type="entry name" value="CsrA-like"/>
    <property type="match status" value="1"/>
</dbReference>
<comment type="function">
    <text evidence="1">A translational regulator that binds mRNA to regulate translation initiation and/or mRNA stability. Usually binds in the 5'-UTR at or near the Shine-Dalgarno sequence preventing ribosome-binding, thus repressing translation. Its main target seems to be the major flagellin gene, while its function is anatagonized by FliW.</text>
</comment>
<comment type="subunit">
    <text evidence="1">Homodimer; the beta-strands of each monomer intercalate to form a hydrophobic core, while the alpha-helices form wings that extend away from the core.</text>
</comment>
<comment type="subcellular location">
    <subcellularLocation>
        <location evidence="1">Cytoplasm</location>
    </subcellularLocation>
</comment>
<comment type="similarity">
    <text evidence="1">Belongs to the CsrA/RsmA family.</text>
</comment>